<proteinExistence type="inferred from homology"/>
<comment type="function">
    <text evidence="1">This protein is involved in the repair of mismatches in DNA. It is required for dam-dependent methyl-directed DNA mismatch repair. May act as a 'molecular matchmaker', a protein that promotes the formation of a stable complex between two or more DNA-binding proteins in an ATP-dependent manner without itself being part of a final effector complex.</text>
</comment>
<comment type="similarity">
    <text evidence="1">Belongs to the DNA mismatch repair MutL/HexB family.</text>
</comment>
<name>MUTL_FERNB</name>
<protein>
    <recommendedName>
        <fullName evidence="1">DNA mismatch repair protein MutL</fullName>
    </recommendedName>
</protein>
<keyword id="KW-0227">DNA damage</keyword>
<keyword id="KW-0234">DNA repair</keyword>
<keyword id="KW-1185">Reference proteome</keyword>
<evidence type="ECO:0000255" key="1">
    <source>
        <dbReference type="HAMAP-Rule" id="MF_00149"/>
    </source>
</evidence>
<feature type="chain" id="PRO_1000192179" description="DNA mismatch repair protein MutL">
    <location>
        <begin position="1"/>
        <end position="588"/>
    </location>
</feature>
<reference key="1">
    <citation type="submission" date="2007-07" db="EMBL/GenBank/DDBJ databases">
        <title>Complete sequence of Fervidobacterium nodosum Rt17-B1.</title>
        <authorList>
            <consortium name="US DOE Joint Genome Institute"/>
            <person name="Copeland A."/>
            <person name="Lucas S."/>
            <person name="Lapidus A."/>
            <person name="Barry K."/>
            <person name="Glavina del Rio T."/>
            <person name="Dalin E."/>
            <person name="Tice H."/>
            <person name="Pitluck S."/>
            <person name="Saunders E."/>
            <person name="Brettin T."/>
            <person name="Bruce D."/>
            <person name="Detter J.C."/>
            <person name="Han C."/>
            <person name="Schmutz J."/>
            <person name="Larimer F."/>
            <person name="Land M."/>
            <person name="Hauser L."/>
            <person name="Kyrpides N."/>
            <person name="Mikhailova N."/>
            <person name="Nelson K."/>
            <person name="Gogarten J.P."/>
            <person name="Noll K."/>
            <person name="Richardson P."/>
        </authorList>
    </citation>
    <scope>NUCLEOTIDE SEQUENCE [LARGE SCALE GENOMIC DNA]</scope>
    <source>
        <strain>ATCC 35602 / DSM 5306 / Rt17-B1</strain>
    </source>
</reference>
<organism>
    <name type="scientific">Fervidobacterium nodosum (strain ATCC 35602 / DSM 5306 / Rt17-B1)</name>
    <dbReference type="NCBI Taxonomy" id="381764"/>
    <lineage>
        <taxon>Bacteria</taxon>
        <taxon>Thermotogati</taxon>
        <taxon>Thermotogota</taxon>
        <taxon>Thermotogae</taxon>
        <taxon>Thermotogales</taxon>
        <taxon>Fervidobacteriaceae</taxon>
        <taxon>Fervidobacterium</taxon>
    </lineage>
</organism>
<sequence length="588" mass="67371">MSVIKKLPQEVVSKIAAGEVVINPASVVKELVENSLDANATSIEVQIRNGGKSYIKVSDNGIGMSRDDMLIAIDRFTTSKISALEDIYNIHSYGFRGEALSSIAEVSRLIITSSDGNNAHRLEVIGGKIIKITETHRERGTTVEVYDLFFNIPARRKFLSSEKVETRMVTEIVEKFMLVQPSVSFVFKIEDEIVYNASKGSLEDRFSIIFPEVKEFSLIEPLQSEIMQISGIISSPQYTRRNRSGQIFFVNKRFVIDNLLNLSFERGYGEALAQGEHPYGVIFLDFLPDKIDVNIHPQKLQVKFSDPQNVYNEIARTIRTTLRKFSFFQMSISKNSEEEEKYSSEISNQNLKAENYQHTDSEWYPNQFKNLYQKETPQTYRPYEPLSSISQNLLLPQLNEKSLPKEFIVLKDRYIVFEDLDGLVIIDFHAAHERIIYEQLKENKFETVQLLIPLHIKLGKSFLQLSQQLTDEFKKYGFDFEIKTLEDGSGEVVIKQIPSILKVTDASNVFLEVLEEYRIPFEKPKGLTYVLASKACKSAVKTGDKLSHDEVQQIIKEIKSKNLLTCPHGRPIMMKLSFSQLDSFFERI</sequence>
<accession>A7HNR3</accession>
<gene>
    <name evidence="1" type="primary">mutL</name>
    <name type="ordered locus">Fnod_1711</name>
</gene>
<dbReference type="EMBL" id="CP000771">
    <property type="protein sequence ID" value="ABS61546.1"/>
    <property type="molecule type" value="Genomic_DNA"/>
</dbReference>
<dbReference type="RefSeq" id="WP_011994837.1">
    <property type="nucleotide sequence ID" value="NC_009718.1"/>
</dbReference>
<dbReference type="SMR" id="A7HNR3"/>
<dbReference type="STRING" id="381764.Fnod_1711"/>
<dbReference type="KEGG" id="fno:Fnod_1711"/>
<dbReference type="eggNOG" id="COG0323">
    <property type="taxonomic scope" value="Bacteria"/>
</dbReference>
<dbReference type="HOGENOM" id="CLU_004131_4_0_0"/>
<dbReference type="OrthoDB" id="9763467at2"/>
<dbReference type="Proteomes" id="UP000002415">
    <property type="component" value="Chromosome"/>
</dbReference>
<dbReference type="GO" id="GO:0032300">
    <property type="term" value="C:mismatch repair complex"/>
    <property type="evidence" value="ECO:0007669"/>
    <property type="project" value="InterPro"/>
</dbReference>
<dbReference type="GO" id="GO:0005524">
    <property type="term" value="F:ATP binding"/>
    <property type="evidence" value="ECO:0007669"/>
    <property type="project" value="InterPro"/>
</dbReference>
<dbReference type="GO" id="GO:0016887">
    <property type="term" value="F:ATP hydrolysis activity"/>
    <property type="evidence" value="ECO:0007669"/>
    <property type="project" value="InterPro"/>
</dbReference>
<dbReference type="GO" id="GO:0140664">
    <property type="term" value="F:ATP-dependent DNA damage sensor activity"/>
    <property type="evidence" value="ECO:0007669"/>
    <property type="project" value="InterPro"/>
</dbReference>
<dbReference type="GO" id="GO:0030983">
    <property type="term" value="F:mismatched DNA binding"/>
    <property type="evidence" value="ECO:0007669"/>
    <property type="project" value="InterPro"/>
</dbReference>
<dbReference type="GO" id="GO:0006298">
    <property type="term" value="P:mismatch repair"/>
    <property type="evidence" value="ECO:0007669"/>
    <property type="project" value="UniProtKB-UniRule"/>
</dbReference>
<dbReference type="CDD" id="cd16926">
    <property type="entry name" value="HATPase_MutL-MLH-PMS-like"/>
    <property type="match status" value="1"/>
</dbReference>
<dbReference type="CDD" id="cd00782">
    <property type="entry name" value="MutL_Trans"/>
    <property type="match status" value="1"/>
</dbReference>
<dbReference type="FunFam" id="3.30.565.10:FF:000003">
    <property type="entry name" value="DNA mismatch repair endonuclease MutL"/>
    <property type="match status" value="1"/>
</dbReference>
<dbReference type="Gene3D" id="3.30.230.10">
    <property type="match status" value="1"/>
</dbReference>
<dbReference type="Gene3D" id="3.30.565.10">
    <property type="entry name" value="Histidine kinase-like ATPase, C-terminal domain"/>
    <property type="match status" value="1"/>
</dbReference>
<dbReference type="Gene3D" id="3.30.1540.20">
    <property type="entry name" value="MutL, C-terminal domain, dimerisation subdomain"/>
    <property type="match status" value="1"/>
</dbReference>
<dbReference type="Gene3D" id="3.30.1370.100">
    <property type="entry name" value="MutL, C-terminal domain, regulatory subdomain"/>
    <property type="match status" value="1"/>
</dbReference>
<dbReference type="HAMAP" id="MF_00149">
    <property type="entry name" value="DNA_mis_repair"/>
    <property type="match status" value="1"/>
</dbReference>
<dbReference type="InterPro" id="IPR014762">
    <property type="entry name" value="DNA_mismatch_repair_CS"/>
</dbReference>
<dbReference type="InterPro" id="IPR020667">
    <property type="entry name" value="DNA_mismatch_repair_MutL"/>
</dbReference>
<dbReference type="InterPro" id="IPR013507">
    <property type="entry name" value="DNA_mismatch_S5_2-like"/>
</dbReference>
<dbReference type="InterPro" id="IPR036890">
    <property type="entry name" value="HATPase_C_sf"/>
</dbReference>
<dbReference type="InterPro" id="IPR002099">
    <property type="entry name" value="MutL/Mlh/PMS"/>
</dbReference>
<dbReference type="InterPro" id="IPR038973">
    <property type="entry name" value="MutL/Mlh/Pms-like"/>
</dbReference>
<dbReference type="InterPro" id="IPR014790">
    <property type="entry name" value="MutL_C"/>
</dbReference>
<dbReference type="InterPro" id="IPR042120">
    <property type="entry name" value="MutL_C_dimsub"/>
</dbReference>
<dbReference type="InterPro" id="IPR042121">
    <property type="entry name" value="MutL_C_regsub"/>
</dbReference>
<dbReference type="InterPro" id="IPR037198">
    <property type="entry name" value="MutL_C_sf"/>
</dbReference>
<dbReference type="InterPro" id="IPR020568">
    <property type="entry name" value="Ribosomal_Su5_D2-typ_SF"/>
</dbReference>
<dbReference type="InterPro" id="IPR014721">
    <property type="entry name" value="Ribsml_uS5_D2-typ_fold_subgr"/>
</dbReference>
<dbReference type="NCBIfam" id="TIGR00585">
    <property type="entry name" value="mutl"/>
    <property type="match status" value="1"/>
</dbReference>
<dbReference type="PANTHER" id="PTHR10073">
    <property type="entry name" value="DNA MISMATCH REPAIR PROTEIN MLH, PMS, MUTL"/>
    <property type="match status" value="1"/>
</dbReference>
<dbReference type="PANTHER" id="PTHR10073:SF12">
    <property type="entry name" value="DNA MISMATCH REPAIR PROTEIN MLH1"/>
    <property type="match status" value="1"/>
</dbReference>
<dbReference type="Pfam" id="PF01119">
    <property type="entry name" value="DNA_mis_repair"/>
    <property type="match status" value="1"/>
</dbReference>
<dbReference type="Pfam" id="PF13589">
    <property type="entry name" value="HATPase_c_3"/>
    <property type="match status" value="1"/>
</dbReference>
<dbReference type="Pfam" id="PF08676">
    <property type="entry name" value="MutL_C"/>
    <property type="match status" value="1"/>
</dbReference>
<dbReference type="SMART" id="SM01340">
    <property type="entry name" value="DNA_mis_repair"/>
    <property type="match status" value="1"/>
</dbReference>
<dbReference type="SMART" id="SM00853">
    <property type="entry name" value="MutL_C"/>
    <property type="match status" value="1"/>
</dbReference>
<dbReference type="SUPFAM" id="SSF55874">
    <property type="entry name" value="ATPase domain of HSP90 chaperone/DNA topoisomerase II/histidine kinase"/>
    <property type="match status" value="1"/>
</dbReference>
<dbReference type="SUPFAM" id="SSF118116">
    <property type="entry name" value="DNA mismatch repair protein MutL"/>
    <property type="match status" value="1"/>
</dbReference>
<dbReference type="SUPFAM" id="SSF54211">
    <property type="entry name" value="Ribosomal protein S5 domain 2-like"/>
    <property type="match status" value="1"/>
</dbReference>
<dbReference type="PROSITE" id="PS00058">
    <property type="entry name" value="DNA_MISMATCH_REPAIR_1"/>
    <property type="match status" value="1"/>
</dbReference>